<proteinExistence type="inferred from homology"/>
<name>GCSH_ACIBS</name>
<dbReference type="EMBL" id="CU468230">
    <property type="protein sequence ID" value="CAP01432.1"/>
    <property type="molecule type" value="Genomic_DNA"/>
</dbReference>
<dbReference type="SMR" id="B0VR13"/>
<dbReference type="KEGG" id="abm:ABSDF2104"/>
<dbReference type="HOGENOM" id="CLU_097408_2_0_6"/>
<dbReference type="Proteomes" id="UP000001741">
    <property type="component" value="Chromosome"/>
</dbReference>
<dbReference type="GO" id="GO:0005829">
    <property type="term" value="C:cytosol"/>
    <property type="evidence" value="ECO:0007669"/>
    <property type="project" value="TreeGrafter"/>
</dbReference>
<dbReference type="GO" id="GO:0005960">
    <property type="term" value="C:glycine cleavage complex"/>
    <property type="evidence" value="ECO:0007669"/>
    <property type="project" value="InterPro"/>
</dbReference>
<dbReference type="GO" id="GO:0019464">
    <property type="term" value="P:glycine decarboxylation via glycine cleavage system"/>
    <property type="evidence" value="ECO:0007669"/>
    <property type="project" value="UniProtKB-UniRule"/>
</dbReference>
<dbReference type="CDD" id="cd06848">
    <property type="entry name" value="GCS_H"/>
    <property type="match status" value="1"/>
</dbReference>
<dbReference type="Gene3D" id="2.40.50.100">
    <property type="match status" value="1"/>
</dbReference>
<dbReference type="HAMAP" id="MF_00272">
    <property type="entry name" value="GcvH"/>
    <property type="match status" value="1"/>
</dbReference>
<dbReference type="InterPro" id="IPR003016">
    <property type="entry name" value="2-oxoA_DH_lipoyl-BS"/>
</dbReference>
<dbReference type="InterPro" id="IPR000089">
    <property type="entry name" value="Biotin_lipoyl"/>
</dbReference>
<dbReference type="InterPro" id="IPR002930">
    <property type="entry name" value="GCV_H"/>
</dbReference>
<dbReference type="InterPro" id="IPR033753">
    <property type="entry name" value="GCV_H/Fam206"/>
</dbReference>
<dbReference type="InterPro" id="IPR017453">
    <property type="entry name" value="GCV_H_sub"/>
</dbReference>
<dbReference type="InterPro" id="IPR011053">
    <property type="entry name" value="Single_hybrid_motif"/>
</dbReference>
<dbReference type="NCBIfam" id="TIGR00527">
    <property type="entry name" value="gcvH"/>
    <property type="match status" value="1"/>
</dbReference>
<dbReference type="NCBIfam" id="NF002270">
    <property type="entry name" value="PRK01202.1"/>
    <property type="match status" value="1"/>
</dbReference>
<dbReference type="PANTHER" id="PTHR11715">
    <property type="entry name" value="GLYCINE CLEAVAGE SYSTEM H PROTEIN"/>
    <property type="match status" value="1"/>
</dbReference>
<dbReference type="PANTHER" id="PTHR11715:SF3">
    <property type="entry name" value="GLYCINE CLEAVAGE SYSTEM H PROTEIN-RELATED"/>
    <property type="match status" value="1"/>
</dbReference>
<dbReference type="Pfam" id="PF01597">
    <property type="entry name" value="GCV_H"/>
    <property type="match status" value="1"/>
</dbReference>
<dbReference type="SUPFAM" id="SSF51230">
    <property type="entry name" value="Single hybrid motif"/>
    <property type="match status" value="1"/>
</dbReference>
<dbReference type="PROSITE" id="PS50968">
    <property type="entry name" value="BIOTINYL_LIPOYL"/>
    <property type="match status" value="1"/>
</dbReference>
<dbReference type="PROSITE" id="PS00189">
    <property type="entry name" value="LIPOYL"/>
    <property type="match status" value="1"/>
</dbReference>
<keyword id="KW-0450">Lipoyl</keyword>
<comment type="function">
    <text evidence="1">The glycine cleavage system catalyzes the degradation of glycine. The H protein shuttles the methylamine group of glycine from the P protein to the T protein.</text>
</comment>
<comment type="cofactor">
    <cofactor evidence="1">
        <name>(R)-lipoate</name>
        <dbReference type="ChEBI" id="CHEBI:83088"/>
    </cofactor>
    <text evidence="1">Binds 1 lipoyl cofactor covalently.</text>
</comment>
<comment type="subunit">
    <text evidence="1">The glycine cleavage system is composed of four proteins: P, T, L and H.</text>
</comment>
<comment type="similarity">
    <text evidence="1">Belongs to the GcvH family.</text>
</comment>
<organism>
    <name type="scientific">Acinetobacter baumannii (strain SDF)</name>
    <dbReference type="NCBI Taxonomy" id="509170"/>
    <lineage>
        <taxon>Bacteria</taxon>
        <taxon>Pseudomonadati</taxon>
        <taxon>Pseudomonadota</taxon>
        <taxon>Gammaproteobacteria</taxon>
        <taxon>Moraxellales</taxon>
        <taxon>Moraxellaceae</taxon>
        <taxon>Acinetobacter</taxon>
        <taxon>Acinetobacter calcoaceticus/baumannii complex</taxon>
    </lineage>
</organism>
<sequence length="124" mass="13652">MNHPSELKYARTHEWVKIEGDLVITGITDHAQDELGDLVYVETPEVGSQVTAGEQARVVESVKTASDIHAPVSGTVVEVNTDLEDDPDFVNEDPYGKGWIYKIKPDNIADVEKLLTNAEYEAGL</sequence>
<feature type="chain" id="PRO_1000114491" description="Glycine cleavage system H protein">
    <location>
        <begin position="1"/>
        <end position="124"/>
    </location>
</feature>
<feature type="domain" description="Lipoyl-binding" evidence="2">
    <location>
        <begin position="22"/>
        <end position="104"/>
    </location>
</feature>
<feature type="modified residue" description="N6-lipoyllysine" evidence="1">
    <location>
        <position position="63"/>
    </location>
</feature>
<evidence type="ECO:0000255" key="1">
    <source>
        <dbReference type="HAMAP-Rule" id="MF_00272"/>
    </source>
</evidence>
<evidence type="ECO:0000255" key="2">
    <source>
        <dbReference type="PROSITE-ProRule" id="PRU01066"/>
    </source>
</evidence>
<accession>B0VR13</accession>
<gene>
    <name evidence="1" type="primary">gcvH</name>
    <name type="ordered locus">ABSDF2104</name>
</gene>
<protein>
    <recommendedName>
        <fullName evidence="1">Glycine cleavage system H protein</fullName>
    </recommendedName>
</protein>
<reference key="1">
    <citation type="journal article" date="2008" name="PLoS ONE">
        <title>Comparative analysis of Acinetobacters: three genomes for three lifestyles.</title>
        <authorList>
            <person name="Vallenet D."/>
            <person name="Nordmann P."/>
            <person name="Barbe V."/>
            <person name="Poirel L."/>
            <person name="Mangenot S."/>
            <person name="Bataille E."/>
            <person name="Dossat C."/>
            <person name="Gas S."/>
            <person name="Kreimeyer A."/>
            <person name="Lenoble P."/>
            <person name="Oztas S."/>
            <person name="Poulain J."/>
            <person name="Segurens B."/>
            <person name="Robert C."/>
            <person name="Abergel C."/>
            <person name="Claverie J.-M."/>
            <person name="Raoult D."/>
            <person name="Medigue C."/>
            <person name="Weissenbach J."/>
            <person name="Cruveiller S."/>
        </authorList>
    </citation>
    <scope>NUCLEOTIDE SEQUENCE [LARGE SCALE GENOMIC DNA]</scope>
    <source>
        <strain>SDF</strain>
    </source>
</reference>